<gene>
    <name evidence="1" type="primary">hslV</name>
    <name type="ordered locus">BG0299</name>
</gene>
<protein>
    <recommendedName>
        <fullName evidence="1">ATP-dependent protease subunit HslV</fullName>
        <ecNumber evidence="1">3.4.25.2</ecNumber>
    </recommendedName>
</protein>
<proteinExistence type="inferred from homology"/>
<keyword id="KW-0021">Allosteric enzyme</keyword>
<keyword id="KW-0963">Cytoplasm</keyword>
<keyword id="KW-0378">Hydrolase</keyword>
<keyword id="KW-0479">Metal-binding</keyword>
<keyword id="KW-0645">Protease</keyword>
<keyword id="KW-0915">Sodium</keyword>
<keyword id="KW-0888">Threonine protease</keyword>
<evidence type="ECO:0000255" key="1">
    <source>
        <dbReference type="HAMAP-Rule" id="MF_00248"/>
    </source>
</evidence>
<dbReference type="EC" id="3.4.25.2" evidence="1"/>
<dbReference type="EMBL" id="CP000013">
    <property type="protein sequence ID" value="AAU07152.1"/>
    <property type="molecule type" value="Genomic_DNA"/>
</dbReference>
<dbReference type="RefSeq" id="WP_011193629.1">
    <property type="nucleotide sequence ID" value="NC_006156.1"/>
</dbReference>
<dbReference type="SMR" id="Q661W9"/>
<dbReference type="GeneID" id="45161089"/>
<dbReference type="KEGG" id="bga:BG0299"/>
<dbReference type="eggNOG" id="COG5405">
    <property type="taxonomic scope" value="Bacteria"/>
</dbReference>
<dbReference type="HOGENOM" id="CLU_093872_1_0_12"/>
<dbReference type="OrthoDB" id="9804884at2"/>
<dbReference type="Proteomes" id="UP000002276">
    <property type="component" value="Chromosome"/>
</dbReference>
<dbReference type="GO" id="GO:0009376">
    <property type="term" value="C:HslUV protease complex"/>
    <property type="evidence" value="ECO:0007669"/>
    <property type="project" value="UniProtKB-UniRule"/>
</dbReference>
<dbReference type="GO" id="GO:0005839">
    <property type="term" value="C:proteasome core complex"/>
    <property type="evidence" value="ECO:0007669"/>
    <property type="project" value="InterPro"/>
</dbReference>
<dbReference type="GO" id="GO:0046872">
    <property type="term" value="F:metal ion binding"/>
    <property type="evidence" value="ECO:0007669"/>
    <property type="project" value="UniProtKB-KW"/>
</dbReference>
<dbReference type="GO" id="GO:0004298">
    <property type="term" value="F:threonine-type endopeptidase activity"/>
    <property type="evidence" value="ECO:0007669"/>
    <property type="project" value="UniProtKB-KW"/>
</dbReference>
<dbReference type="GO" id="GO:0051603">
    <property type="term" value="P:proteolysis involved in protein catabolic process"/>
    <property type="evidence" value="ECO:0007669"/>
    <property type="project" value="InterPro"/>
</dbReference>
<dbReference type="CDD" id="cd01913">
    <property type="entry name" value="protease_HslV"/>
    <property type="match status" value="1"/>
</dbReference>
<dbReference type="Gene3D" id="3.60.20.10">
    <property type="entry name" value="Glutamine Phosphoribosylpyrophosphate, subunit 1, domain 1"/>
    <property type="match status" value="1"/>
</dbReference>
<dbReference type="HAMAP" id="MF_00248">
    <property type="entry name" value="HslV"/>
    <property type="match status" value="1"/>
</dbReference>
<dbReference type="InterPro" id="IPR022281">
    <property type="entry name" value="ATP-dep_Prtase_HsIV_su"/>
</dbReference>
<dbReference type="InterPro" id="IPR029055">
    <property type="entry name" value="Ntn_hydrolases_N"/>
</dbReference>
<dbReference type="InterPro" id="IPR001353">
    <property type="entry name" value="Proteasome_sua/b"/>
</dbReference>
<dbReference type="InterPro" id="IPR023333">
    <property type="entry name" value="Proteasome_suB-type"/>
</dbReference>
<dbReference type="NCBIfam" id="TIGR03692">
    <property type="entry name" value="ATP_dep_HslV"/>
    <property type="match status" value="1"/>
</dbReference>
<dbReference type="NCBIfam" id="NF003964">
    <property type="entry name" value="PRK05456.1"/>
    <property type="match status" value="1"/>
</dbReference>
<dbReference type="PANTHER" id="PTHR32194:SF0">
    <property type="entry name" value="ATP-DEPENDENT PROTEASE SUBUNIT HSLV"/>
    <property type="match status" value="1"/>
</dbReference>
<dbReference type="PANTHER" id="PTHR32194">
    <property type="entry name" value="METALLOPROTEASE TLDD"/>
    <property type="match status" value="1"/>
</dbReference>
<dbReference type="Pfam" id="PF00227">
    <property type="entry name" value="Proteasome"/>
    <property type="match status" value="1"/>
</dbReference>
<dbReference type="PIRSF" id="PIRSF039093">
    <property type="entry name" value="HslV"/>
    <property type="match status" value="1"/>
</dbReference>
<dbReference type="SUPFAM" id="SSF56235">
    <property type="entry name" value="N-terminal nucleophile aminohydrolases (Ntn hydrolases)"/>
    <property type="match status" value="1"/>
</dbReference>
<dbReference type="PROSITE" id="PS51476">
    <property type="entry name" value="PROTEASOME_BETA_2"/>
    <property type="match status" value="1"/>
</dbReference>
<feature type="chain" id="PRO_0000148088" description="ATP-dependent protease subunit HslV">
    <location>
        <begin position="1"/>
        <end position="182"/>
    </location>
</feature>
<feature type="active site" evidence="1">
    <location>
        <position position="6"/>
    </location>
</feature>
<feature type="binding site" evidence="1">
    <location>
        <position position="164"/>
    </location>
    <ligand>
        <name>Na(+)</name>
        <dbReference type="ChEBI" id="CHEBI:29101"/>
    </ligand>
</feature>
<feature type="binding site" evidence="1">
    <location>
        <position position="167"/>
    </location>
    <ligand>
        <name>Na(+)</name>
        <dbReference type="ChEBI" id="CHEBI:29101"/>
    </ligand>
</feature>
<feature type="binding site" evidence="1">
    <location>
        <position position="170"/>
    </location>
    <ligand>
        <name>Na(+)</name>
        <dbReference type="ChEBI" id="CHEBI:29101"/>
    </ligand>
</feature>
<sequence>MGFKGTTVIAIKKNGKTVVAADGQVLFGHTVLKSNAIKIRKLLNGKILAGFAGSTSDAITLFEKFEEKIKAKGDGLIDIKRAAVDLAKDWRSDKILHKLEAMMLVADSKNILLISGTGDVVEPEEDVISIGSGGNYAYSAALAYMENKKLSAFEVALRSLKIAARVCIYTNSNIVLEEIENE</sequence>
<organism>
    <name type="scientific">Borrelia garinii subsp. bavariensis (strain ATCC BAA-2496 / DSM 23469 / PBi)</name>
    <name type="common">Borreliella bavariensis</name>
    <dbReference type="NCBI Taxonomy" id="290434"/>
    <lineage>
        <taxon>Bacteria</taxon>
        <taxon>Pseudomonadati</taxon>
        <taxon>Spirochaetota</taxon>
        <taxon>Spirochaetia</taxon>
        <taxon>Spirochaetales</taxon>
        <taxon>Borreliaceae</taxon>
        <taxon>Borreliella</taxon>
    </lineage>
</organism>
<name>HSLV_BORGP</name>
<reference key="1">
    <citation type="journal article" date="2004" name="Nucleic Acids Res.">
        <title>Comparative analysis of the Borrelia garinii genome.</title>
        <authorList>
            <person name="Gloeckner G."/>
            <person name="Lehmann R."/>
            <person name="Romualdi A."/>
            <person name="Pradella S."/>
            <person name="Schulte-Spechtel U."/>
            <person name="Schilhabel M."/>
            <person name="Wilske B."/>
            <person name="Suehnel J."/>
            <person name="Platzer M."/>
        </authorList>
    </citation>
    <scope>NUCLEOTIDE SEQUENCE [LARGE SCALE GENOMIC DNA]</scope>
    <source>
        <strain>ATCC BAA-2496 / DSM 23469 / PBi</strain>
    </source>
</reference>
<accession>Q661W9</accession>
<comment type="function">
    <text evidence="1">Protease subunit of a proteasome-like degradation complex believed to be a general protein degrading machinery.</text>
</comment>
<comment type="catalytic activity">
    <reaction evidence="1">
        <text>ATP-dependent cleavage of peptide bonds with broad specificity.</text>
        <dbReference type="EC" id="3.4.25.2"/>
    </reaction>
</comment>
<comment type="activity regulation">
    <text evidence="1">Allosterically activated by HslU binding.</text>
</comment>
<comment type="subunit">
    <text evidence="1">A double ring-shaped homohexamer of HslV is capped on each side by a ring-shaped HslU homohexamer. The assembly of the HslU/HslV complex is dependent on binding of ATP.</text>
</comment>
<comment type="subcellular location">
    <subcellularLocation>
        <location evidence="1">Cytoplasm</location>
    </subcellularLocation>
</comment>
<comment type="similarity">
    <text evidence="1">Belongs to the peptidase T1B family. HslV subfamily.</text>
</comment>